<comment type="function">
    <text evidence="1">Specifically methylates the N4 position of cytidine in position 1402 (C1402) of 16S rRNA.</text>
</comment>
<comment type="catalytic activity">
    <reaction evidence="1">
        <text>cytidine(1402) in 16S rRNA + S-adenosyl-L-methionine = N(4)-methylcytidine(1402) in 16S rRNA + S-adenosyl-L-homocysteine + H(+)</text>
        <dbReference type="Rhea" id="RHEA:42928"/>
        <dbReference type="Rhea" id="RHEA-COMP:10286"/>
        <dbReference type="Rhea" id="RHEA-COMP:10287"/>
        <dbReference type="ChEBI" id="CHEBI:15378"/>
        <dbReference type="ChEBI" id="CHEBI:57856"/>
        <dbReference type="ChEBI" id="CHEBI:59789"/>
        <dbReference type="ChEBI" id="CHEBI:74506"/>
        <dbReference type="ChEBI" id="CHEBI:82748"/>
        <dbReference type="EC" id="2.1.1.199"/>
    </reaction>
</comment>
<comment type="subcellular location">
    <subcellularLocation>
        <location evidence="1">Cytoplasm</location>
    </subcellularLocation>
</comment>
<comment type="similarity">
    <text evidence="1">Belongs to the methyltransferase superfamily. RsmH family.</text>
</comment>
<reference key="1">
    <citation type="journal article" date="2004" name="Science">
        <title>The complete genome sequence of Propionibacterium acnes, a commensal of human skin.</title>
        <authorList>
            <person name="Brueggemann H."/>
            <person name="Henne A."/>
            <person name="Hoster F."/>
            <person name="Liesegang H."/>
            <person name="Wiezer A."/>
            <person name="Strittmatter A."/>
            <person name="Hujer S."/>
            <person name="Duerre P."/>
            <person name="Gottschalk G."/>
        </authorList>
    </citation>
    <scope>NUCLEOTIDE SEQUENCE [LARGE SCALE GENOMIC DNA]</scope>
    <source>
        <strain>DSM 16379 / KPA171202</strain>
    </source>
</reference>
<evidence type="ECO:0000255" key="1">
    <source>
        <dbReference type="HAMAP-Rule" id="MF_01007"/>
    </source>
</evidence>
<feature type="chain" id="PRO_0000108681" description="Ribosomal RNA small subunit methyltransferase H">
    <location>
        <begin position="1"/>
        <end position="337"/>
    </location>
</feature>
<feature type="binding site" evidence="1">
    <location>
        <begin position="45"/>
        <end position="47"/>
    </location>
    <ligand>
        <name>S-adenosyl-L-methionine</name>
        <dbReference type="ChEBI" id="CHEBI:59789"/>
    </ligand>
</feature>
<feature type="binding site" evidence="1">
    <location>
        <position position="64"/>
    </location>
    <ligand>
        <name>S-adenosyl-L-methionine</name>
        <dbReference type="ChEBI" id="CHEBI:59789"/>
    </ligand>
</feature>
<feature type="binding site" evidence="1">
    <location>
        <position position="91"/>
    </location>
    <ligand>
        <name>S-adenosyl-L-methionine</name>
        <dbReference type="ChEBI" id="CHEBI:59789"/>
    </ligand>
</feature>
<feature type="binding site" evidence="1">
    <location>
        <position position="112"/>
    </location>
    <ligand>
        <name>S-adenosyl-L-methionine</name>
        <dbReference type="ChEBI" id="CHEBI:59789"/>
    </ligand>
</feature>
<feature type="binding site" evidence="1">
    <location>
        <position position="119"/>
    </location>
    <ligand>
        <name>S-adenosyl-L-methionine</name>
        <dbReference type="ChEBI" id="CHEBI:59789"/>
    </ligand>
</feature>
<name>RSMH_CUTAK</name>
<proteinExistence type="inferred from homology"/>
<protein>
    <recommendedName>
        <fullName evidence="1">Ribosomal RNA small subunit methyltransferase H</fullName>
        <ecNumber evidence="1">2.1.1.199</ecNumber>
    </recommendedName>
    <alternativeName>
        <fullName evidence="1">16S rRNA m(4)C1402 methyltransferase</fullName>
    </alternativeName>
    <alternativeName>
        <fullName evidence="1">rRNA (cytosine-N(4)-)-methyltransferase RsmH</fullName>
    </alternativeName>
</protein>
<dbReference type="EC" id="2.1.1.199" evidence="1"/>
<dbReference type="EMBL" id="AE017283">
    <property type="protein sequence ID" value="AAT82506.1"/>
    <property type="molecule type" value="Genomic_DNA"/>
</dbReference>
<dbReference type="RefSeq" id="WP_002530963.1">
    <property type="nucleotide sequence ID" value="NZ_CP025935.1"/>
</dbReference>
<dbReference type="SMR" id="Q6A9R0"/>
<dbReference type="EnsemblBacteria" id="AAT82506">
    <property type="protein sequence ID" value="AAT82506"/>
    <property type="gene ID" value="PPA0750"/>
</dbReference>
<dbReference type="KEGG" id="pac:PPA0750"/>
<dbReference type="PATRIC" id="fig|267747.3.peg.787"/>
<dbReference type="eggNOG" id="COG0275">
    <property type="taxonomic scope" value="Bacteria"/>
</dbReference>
<dbReference type="HOGENOM" id="CLU_038422_0_0_11"/>
<dbReference type="Proteomes" id="UP000000603">
    <property type="component" value="Chromosome"/>
</dbReference>
<dbReference type="GO" id="GO:0005737">
    <property type="term" value="C:cytoplasm"/>
    <property type="evidence" value="ECO:0007669"/>
    <property type="project" value="UniProtKB-SubCell"/>
</dbReference>
<dbReference type="GO" id="GO:0071424">
    <property type="term" value="F:rRNA (cytosine-N4-)-methyltransferase activity"/>
    <property type="evidence" value="ECO:0007669"/>
    <property type="project" value="UniProtKB-UniRule"/>
</dbReference>
<dbReference type="GO" id="GO:0070475">
    <property type="term" value="P:rRNA base methylation"/>
    <property type="evidence" value="ECO:0007669"/>
    <property type="project" value="UniProtKB-UniRule"/>
</dbReference>
<dbReference type="FunFam" id="1.10.150.170:FF:000001">
    <property type="entry name" value="Ribosomal RNA small subunit methyltransferase H"/>
    <property type="match status" value="1"/>
</dbReference>
<dbReference type="Gene3D" id="1.10.150.170">
    <property type="entry name" value="Putative methyltransferase TM0872, insert domain"/>
    <property type="match status" value="1"/>
</dbReference>
<dbReference type="Gene3D" id="3.40.50.150">
    <property type="entry name" value="Vaccinia Virus protein VP39"/>
    <property type="match status" value="1"/>
</dbReference>
<dbReference type="HAMAP" id="MF_01007">
    <property type="entry name" value="16SrRNA_methyltr_H"/>
    <property type="match status" value="1"/>
</dbReference>
<dbReference type="InterPro" id="IPR002903">
    <property type="entry name" value="RsmH"/>
</dbReference>
<dbReference type="InterPro" id="IPR023397">
    <property type="entry name" value="SAM-dep_MeTrfase_MraW_recog"/>
</dbReference>
<dbReference type="InterPro" id="IPR029063">
    <property type="entry name" value="SAM-dependent_MTases_sf"/>
</dbReference>
<dbReference type="NCBIfam" id="TIGR00006">
    <property type="entry name" value="16S rRNA (cytosine(1402)-N(4))-methyltransferase RsmH"/>
    <property type="match status" value="1"/>
</dbReference>
<dbReference type="PANTHER" id="PTHR11265:SF0">
    <property type="entry name" value="12S RRNA N4-METHYLCYTIDINE METHYLTRANSFERASE"/>
    <property type="match status" value="1"/>
</dbReference>
<dbReference type="PANTHER" id="PTHR11265">
    <property type="entry name" value="S-ADENOSYL-METHYLTRANSFERASE MRAW"/>
    <property type="match status" value="1"/>
</dbReference>
<dbReference type="Pfam" id="PF01795">
    <property type="entry name" value="Methyltransf_5"/>
    <property type="match status" value="1"/>
</dbReference>
<dbReference type="PIRSF" id="PIRSF004486">
    <property type="entry name" value="MraW"/>
    <property type="match status" value="1"/>
</dbReference>
<dbReference type="SUPFAM" id="SSF81799">
    <property type="entry name" value="Putative methyltransferase TM0872, insert domain"/>
    <property type="match status" value="1"/>
</dbReference>
<dbReference type="SUPFAM" id="SSF53335">
    <property type="entry name" value="S-adenosyl-L-methionine-dependent methyltransferases"/>
    <property type="match status" value="1"/>
</dbReference>
<accession>Q6A9R0</accession>
<organism>
    <name type="scientific">Cutibacterium acnes (strain DSM 16379 / KPA171202)</name>
    <name type="common">Propionibacterium acnes</name>
    <dbReference type="NCBI Taxonomy" id="267747"/>
    <lineage>
        <taxon>Bacteria</taxon>
        <taxon>Bacillati</taxon>
        <taxon>Actinomycetota</taxon>
        <taxon>Actinomycetes</taxon>
        <taxon>Propionibacteriales</taxon>
        <taxon>Propionibacteriaceae</taxon>
        <taxon>Cutibacterium</taxon>
    </lineage>
</organism>
<sequence>MLMATDAIGSDAVHIPVMRARILDLLAVVLKSGRRVHVDGTLGMGGHAEAVLRRFPDVELVGIDRDQQALTMAEARLEPFADRVHLVHAVHDELPEVLDDLGLDYVDSVLLDLGLSSFQIDEVERGFSYSVDSPLDMRMDQSSGRTAAQILNESDPGALVRMLREYGEEKFADRIVRAIVTERDRQPIETSGRLVEIITEAIPATVRRKRHSHPAKRTFQALRIAVNREMETLPAVLPRALDRLDVGGRIAVLSYHSLEDRPVKEAFRDACADTAPAGLPMVPESMAAKFNPVTRGAERPDADEVATNPRSASARLRVIERVRPGPVNRQHATKESR</sequence>
<keyword id="KW-0963">Cytoplasm</keyword>
<keyword id="KW-0489">Methyltransferase</keyword>
<keyword id="KW-0698">rRNA processing</keyword>
<keyword id="KW-0949">S-adenosyl-L-methionine</keyword>
<keyword id="KW-0808">Transferase</keyword>
<gene>
    <name evidence="1" type="primary">rsmH</name>
    <name type="synonym">mraW</name>
    <name type="ordered locus">PPA0750</name>
</gene>